<reference key="1">
    <citation type="journal article" date="2010" name="BMC Genomics">
        <title>A genomic perspective on the potential of Actinobacillus succinogenes for industrial succinate production.</title>
        <authorList>
            <person name="McKinlay J.B."/>
            <person name="Laivenieks M."/>
            <person name="Schindler B.D."/>
            <person name="McKinlay A.A."/>
            <person name="Siddaramappa S."/>
            <person name="Challacombe J.F."/>
            <person name="Lowry S.R."/>
            <person name="Clum A."/>
            <person name="Lapidus A.L."/>
            <person name="Burkhart K.B."/>
            <person name="Harkins V."/>
            <person name="Vieille C."/>
        </authorList>
    </citation>
    <scope>NUCLEOTIDE SEQUENCE [LARGE SCALE GENOMIC DNA]</scope>
    <source>
        <strain>ATCC 55618 / DSM 22257 / CCUG 43843 / 130Z</strain>
    </source>
</reference>
<gene>
    <name evidence="1" type="primary">pyrF</name>
    <name type="ordered locus">Asuc_1548</name>
</gene>
<keyword id="KW-0210">Decarboxylase</keyword>
<keyword id="KW-0456">Lyase</keyword>
<keyword id="KW-0665">Pyrimidine biosynthesis</keyword>
<keyword id="KW-1185">Reference proteome</keyword>
<protein>
    <recommendedName>
        <fullName evidence="1">Orotidine 5'-phosphate decarboxylase</fullName>
        <ecNumber evidence="1">4.1.1.23</ecNumber>
    </recommendedName>
    <alternativeName>
        <fullName evidence="1">OMP decarboxylase</fullName>
        <shortName evidence="1">OMPDCase</shortName>
        <shortName evidence="1">OMPdecase</shortName>
    </alternativeName>
</protein>
<dbReference type="EC" id="4.1.1.23" evidence="1"/>
<dbReference type="EMBL" id="CP000746">
    <property type="protein sequence ID" value="ABR74902.1"/>
    <property type="molecule type" value="Genomic_DNA"/>
</dbReference>
<dbReference type="RefSeq" id="WP_012073279.1">
    <property type="nucleotide sequence ID" value="NC_009655.1"/>
</dbReference>
<dbReference type="SMR" id="A6VPK5"/>
<dbReference type="STRING" id="339671.Asuc_1548"/>
<dbReference type="KEGG" id="asu:Asuc_1548"/>
<dbReference type="eggNOG" id="COG0284">
    <property type="taxonomic scope" value="Bacteria"/>
</dbReference>
<dbReference type="HOGENOM" id="CLU_067069_0_0_6"/>
<dbReference type="OrthoDB" id="9806203at2"/>
<dbReference type="UniPathway" id="UPA00070">
    <property type="reaction ID" value="UER00120"/>
</dbReference>
<dbReference type="Proteomes" id="UP000001114">
    <property type="component" value="Chromosome"/>
</dbReference>
<dbReference type="GO" id="GO:0005829">
    <property type="term" value="C:cytosol"/>
    <property type="evidence" value="ECO:0007669"/>
    <property type="project" value="TreeGrafter"/>
</dbReference>
<dbReference type="GO" id="GO:0004590">
    <property type="term" value="F:orotidine-5'-phosphate decarboxylase activity"/>
    <property type="evidence" value="ECO:0007669"/>
    <property type="project" value="UniProtKB-UniRule"/>
</dbReference>
<dbReference type="GO" id="GO:0006207">
    <property type="term" value="P:'de novo' pyrimidine nucleobase biosynthetic process"/>
    <property type="evidence" value="ECO:0007669"/>
    <property type="project" value="InterPro"/>
</dbReference>
<dbReference type="GO" id="GO:0044205">
    <property type="term" value="P:'de novo' UMP biosynthetic process"/>
    <property type="evidence" value="ECO:0007669"/>
    <property type="project" value="UniProtKB-UniRule"/>
</dbReference>
<dbReference type="CDD" id="cd04725">
    <property type="entry name" value="OMP_decarboxylase_like"/>
    <property type="match status" value="1"/>
</dbReference>
<dbReference type="FunFam" id="3.20.20.70:FF:000015">
    <property type="entry name" value="Orotidine 5'-phosphate decarboxylase"/>
    <property type="match status" value="1"/>
</dbReference>
<dbReference type="Gene3D" id="3.20.20.70">
    <property type="entry name" value="Aldolase class I"/>
    <property type="match status" value="1"/>
</dbReference>
<dbReference type="HAMAP" id="MF_01200_B">
    <property type="entry name" value="OMPdecase_type1_B"/>
    <property type="match status" value="1"/>
</dbReference>
<dbReference type="InterPro" id="IPR013785">
    <property type="entry name" value="Aldolase_TIM"/>
</dbReference>
<dbReference type="InterPro" id="IPR014732">
    <property type="entry name" value="OMPdecase"/>
</dbReference>
<dbReference type="InterPro" id="IPR018089">
    <property type="entry name" value="OMPdecase_AS"/>
</dbReference>
<dbReference type="InterPro" id="IPR047596">
    <property type="entry name" value="OMPdecase_bac"/>
</dbReference>
<dbReference type="InterPro" id="IPR001754">
    <property type="entry name" value="OMPdeCOase_dom"/>
</dbReference>
<dbReference type="InterPro" id="IPR011060">
    <property type="entry name" value="RibuloseP-bd_barrel"/>
</dbReference>
<dbReference type="NCBIfam" id="NF001273">
    <property type="entry name" value="PRK00230.1"/>
    <property type="match status" value="1"/>
</dbReference>
<dbReference type="NCBIfam" id="TIGR01740">
    <property type="entry name" value="pyrF"/>
    <property type="match status" value="1"/>
</dbReference>
<dbReference type="PANTHER" id="PTHR32119">
    <property type="entry name" value="OROTIDINE 5'-PHOSPHATE DECARBOXYLASE"/>
    <property type="match status" value="1"/>
</dbReference>
<dbReference type="PANTHER" id="PTHR32119:SF2">
    <property type="entry name" value="OROTIDINE 5'-PHOSPHATE DECARBOXYLASE"/>
    <property type="match status" value="1"/>
</dbReference>
<dbReference type="Pfam" id="PF00215">
    <property type="entry name" value="OMPdecase"/>
    <property type="match status" value="1"/>
</dbReference>
<dbReference type="SMART" id="SM00934">
    <property type="entry name" value="OMPdecase"/>
    <property type="match status" value="1"/>
</dbReference>
<dbReference type="SUPFAM" id="SSF51366">
    <property type="entry name" value="Ribulose-phoshate binding barrel"/>
    <property type="match status" value="1"/>
</dbReference>
<dbReference type="PROSITE" id="PS00156">
    <property type="entry name" value="OMPDECASE"/>
    <property type="match status" value="1"/>
</dbReference>
<feature type="chain" id="PRO_1000073085" description="Orotidine 5'-phosphate decarboxylase">
    <location>
        <begin position="1"/>
        <end position="232"/>
    </location>
</feature>
<feature type="active site" description="Proton donor" evidence="1">
    <location>
        <position position="61"/>
    </location>
</feature>
<feature type="binding site" evidence="1">
    <location>
        <position position="10"/>
    </location>
    <ligand>
        <name>substrate</name>
    </ligand>
</feature>
<feature type="binding site" evidence="1">
    <location>
        <position position="32"/>
    </location>
    <ligand>
        <name>substrate</name>
    </ligand>
</feature>
<feature type="binding site" evidence="1">
    <location>
        <begin position="59"/>
        <end position="68"/>
    </location>
    <ligand>
        <name>substrate</name>
    </ligand>
</feature>
<feature type="binding site" evidence="1">
    <location>
        <position position="119"/>
    </location>
    <ligand>
        <name>substrate</name>
    </ligand>
</feature>
<feature type="binding site" evidence="1">
    <location>
        <position position="180"/>
    </location>
    <ligand>
        <name>substrate</name>
    </ligand>
</feature>
<feature type="binding site" evidence="1">
    <location>
        <position position="189"/>
    </location>
    <ligand>
        <name>substrate</name>
    </ligand>
</feature>
<feature type="binding site" evidence="1">
    <location>
        <position position="209"/>
    </location>
    <ligand>
        <name>substrate</name>
    </ligand>
</feature>
<feature type="binding site" evidence="1">
    <location>
        <position position="210"/>
    </location>
    <ligand>
        <name>substrate</name>
    </ligand>
</feature>
<comment type="function">
    <text evidence="1">Catalyzes the decarboxylation of orotidine 5'-monophosphate (OMP) to uridine 5'-monophosphate (UMP).</text>
</comment>
<comment type="catalytic activity">
    <reaction evidence="1">
        <text>orotidine 5'-phosphate + H(+) = UMP + CO2</text>
        <dbReference type="Rhea" id="RHEA:11596"/>
        <dbReference type="ChEBI" id="CHEBI:15378"/>
        <dbReference type="ChEBI" id="CHEBI:16526"/>
        <dbReference type="ChEBI" id="CHEBI:57538"/>
        <dbReference type="ChEBI" id="CHEBI:57865"/>
        <dbReference type="EC" id="4.1.1.23"/>
    </reaction>
</comment>
<comment type="pathway">
    <text evidence="1">Pyrimidine metabolism; UMP biosynthesis via de novo pathway; UMP from orotate: step 2/2.</text>
</comment>
<comment type="subunit">
    <text evidence="1">Homodimer.</text>
</comment>
<comment type="similarity">
    <text evidence="1">Belongs to the OMP decarboxylase family. Type 1 subfamily.</text>
</comment>
<accession>A6VPK5</accession>
<evidence type="ECO:0000255" key="1">
    <source>
        <dbReference type="HAMAP-Rule" id="MF_01200"/>
    </source>
</evidence>
<proteinExistence type="inferred from homology"/>
<organism>
    <name type="scientific">Actinobacillus succinogenes (strain ATCC 55618 / DSM 22257 / CCUG 43843 / 130Z)</name>
    <dbReference type="NCBI Taxonomy" id="339671"/>
    <lineage>
        <taxon>Bacteria</taxon>
        <taxon>Pseudomonadati</taxon>
        <taxon>Pseudomonadota</taxon>
        <taxon>Gammaproteobacteria</taxon>
        <taxon>Pasteurellales</taxon>
        <taxon>Pasteurellaceae</taxon>
        <taxon>Actinobacillus</taxon>
    </lineage>
</organism>
<name>PYRF_ACTSZ</name>
<sequence>MDSKIIVALDYETEAEALSLVDQIDPSLCRLKVGKEMFTTLGTNFVKQLQERKFDVFLDLKFHDIPNTVARAVRSAADLGVWMVDLHASGGLRMMEEAKNILEPYGKDAPILIGVTVLTSMEDLDLLQIGINASPMEQVIRLAHLTQRAGLDGVVCSPQEVEILRKNLGSDFKLVTPGIRPVGSEFGDQRRVMTPSAAVRSGADYLVIGRPITQAENPAEVLRSINASLANI</sequence>